<sequence>MHTVQKDTTFTKIFVGGLPYHTTDASLRKYFEVFGDIDEAVVITDRQTAKSRGYGFVTMSDRAAAERACKDPNPIIDGRKANVNLAYLGAKPRNLQSAFTIGVQQLHPAFIQRPFGLTPQYIYPPTIVQPSMVIPTPIPSLQSPYIDYNAATQAYTHYTTAAYEQYPYAASPATGYMGYGYTSPVQQPLSTTTGAPPTAYIQYQPQQLQPDRMQ</sequence>
<organism>
    <name type="scientific">Xenopus laevis</name>
    <name type="common">African clawed frog</name>
    <dbReference type="NCBI Taxonomy" id="8355"/>
    <lineage>
        <taxon>Eukaryota</taxon>
        <taxon>Metazoa</taxon>
        <taxon>Chordata</taxon>
        <taxon>Craniata</taxon>
        <taxon>Vertebrata</taxon>
        <taxon>Euteleostomi</taxon>
        <taxon>Amphibia</taxon>
        <taxon>Batrachia</taxon>
        <taxon>Anura</taxon>
        <taxon>Pipoidea</taxon>
        <taxon>Pipidae</taxon>
        <taxon>Xenopodinae</taxon>
        <taxon>Xenopus</taxon>
        <taxon>Xenopus</taxon>
    </lineage>
</organism>
<keyword id="KW-0963">Cytoplasm</keyword>
<keyword id="KW-0217">Developmental protein</keyword>
<keyword id="KW-0221">Differentiation</keyword>
<keyword id="KW-0507">mRNA processing</keyword>
<keyword id="KW-0508">mRNA splicing</keyword>
<keyword id="KW-0539">Nucleus</keyword>
<keyword id="KW-1185">Reference proteome</keyword>
<keyword id="KW-0694">RNA-binding</keyword>
<name>RBM38_XENLA</name>
<evidence type="ECO:0000250" key="1"/>
<evidence type="ECO:0000255" key="2">
    <source>
        <dbReference type="PROSITE-ProRule" id="PRU00176"/>
    </source>
</evidence>
<evidence type="ECO:0000269" key="3">
    <source>
    </source>
</evidence>
<evidence type="ECO:0000269" key="4">
    <source>
    </source>
</evidence>
<evidence type="ECO:0000305" key="5"/>
<comment type="function">
    <text evidence="3 4">RNA-binding protein that specifically bind the 3'-UTR of VegT transcripts, leading to maintain their stability and stimulate their translation, thereby playing a role in germ layer formation. VegT is a localized maternal determinant essentially required for endoderm formation. Also has some proneural function in the open neural plate and in the context of retinogenesis. May also act as a mRNA splicing factor. May play a role in myogenic differentiation.</text>
</comment>
<comment type="subcellular location">
    <subcellularLocation>
        <location evidence="1">Cytoplasm</location>
        <location evidence="1">Cytosol</location>
    </subcellularLocation>
    <subcellularLocation>
        <location evidence="1">Nucleus</location>
    </subcellularLocation>
</comment>
<comment type="tissue specificity">
    <text evidence="3">Strongly expressed in the nervous system. Expressed at early neurula stages of development.</text>
</comment>
<comment type="similarity">
    <text evidence="5">Belongs to the RBM38 family.</text>
</comment>
<dbReference type="EMBL" id="AY289193">
    <property type="protein sequence ID" value="AAP42281.1"/>
    <property type="molecule type" value="mRNA"/>
</dbReference>
<dbReference type="EMBL" id="BC072792">
    <property type="protein sequence ID" value="AAH72792.1"/>
    <property type="molecule type" value="mRNA"/>
</dbReference>
<dbReference type="RefSeq" id="NP_001082613.1">
    <property type="nucleotide sequence ID" value="NM_001089144.1"/>
</dbReference>
<dbReference type="SMR" id="Q7T3I7"/>
<dbReference type="DNASU" id="398603"/>
<dbReference type="GeneID" id="398603"/>
<dbReference type="KEGG" id="xla:398603"/>
<dbReference type="AGR" id="Xenbase:XB-GENE-6077629"/>
<dbReference type="CTD" id="398603"/>
<dbReference type="Xenbase" id="XB-GENE-6077629">
    <property type="gene designation" value="rbm38.L"/>
</dbReference>
<dbReference type="OrthoDB" id="4207594at2759"/>
<dbReference type="CD-CODE" id="78E86D56">
    <property type="entry name" value="Mitochondrial cloud"/>
</dbReference>
<dbReference type="Proteomes" id="UP000186698">
    <property type="component" value="Chromosome 9_10L"/>
</dbReference>
<dbReference type="Bgee" id="398603">
    <property type="expression patterns" value="Expressed in ovary and 19 other cell types or tissues"/>
</dbReference>
<dbReference type="GO" id="GO:0005829">
    <property type="term" value="C:cytosol"/>
    <property type="evidence" value="ECO:0000318"/>
    <property type="project" value="GO_Central"/>
</dbReference>
<dbReference type="GO" id="GO:0005634">
    <property type="term" value="C:nucleus"/>
    <property type="evidence" value="ECO:0000318"/>
    <property type="project" value="GO_Central"/>
</dbReference>
<dbReference type="GO" id="GO:0003730">
    <property type="term" value="F:mRNA 3'-UTR binding"/>
    <property type="evidence" value="ECO:0000318"/>
    <property type="project" value="GO_Central"/>
</dbReference>
<dbReference type="GO" id="GO:0030154">
    <property type="term" value="P:cell differentiation"/>
    <property type="evidence" value="ECO:0007669"/>
    <property type="project" value="UniProtKB-KW"/>
</dbReference>
<dbReference type="GO" id="GO:0006397">
    <property type="term" value="P:mRNA processing"/>
    <property type="evidence" value="ECO:0007669"/>
    <property type="project" value="UniProtKB-KW"/>
</dbReference>
<dbReference type="GO" id="GO:0043484">
    <property type="term" value="P:regulation of RNA splicing"/>
    <property type="evidence" value="ECO:0000318"/>
    <property type="project" value="GO_Central"/>
</dbReference>
<dbReference type="GO" id="GO:0008380">
    <property type="term" value="P:RNA splicing"/>
    <property type="evidence" value="ECO:0007669"/>
    <property type="project" value="UniProtKB-KW"/>
</dbReference>
<dbReference type="CDD" id="cd12384">
    <property type="entry name" value="RRM_RBM24_RBM38_like"/>
    <property type="match status" value="1"/>
</dbReference>
<dbReference type="FunFam" id="3.30.70.330:FF:000077">
    <property type="entry name" value="RNA-binding motif protein 24"/>
    <property type="match status" value="1"/>
</dbReference>
<dbReference type="Gene3D" id="3.30.70.330">
    <property type="match status" value="1"/>
</dbReference>
<dbReference type="InterPro" id="IPR012677">
    <property type="entry name" value="Nucleotide-bd_a/b_plait_sf"/>
</dbReference>
<dbReference type="InterPro" id="IPR035979">
    <property type="entry name" value="RBD_domain_sf"/>
</dbReference>
<dbReference type="InterPro" id="IPR050886">
    <property type="entry name" value="RNA-binding_reg"/>
</dbReference>
<dbReference type="InterPro" id="IPR000504">
    <property type="entry name" value="RRM_dom"/>
</dbReference>
<dbReference type="PANTHER" id="PTHR48024">
    <property type="entry name" value="GEO13361P1-RELATED"/>
    <property type="match status" value="1"/>
</dbReference>
<dbReference type="PANTHER" id="PTHR48024:SF28">
    <property type="entry name" value="RNA-BINDING PROTEIN 38"/>
    <property type="match status" value="1"/>
</dbReference>
<dbReference type="Pfam" id="PF00076">
    <property type="entry name" value="RRM_1"/>
    <property type="match status" value="1"/>
</dbReference>
<dbReference type="SMART" id="SM00360">
    <property type="entry name" value="RRM"/>
    <property type="match status" value="1"/>
</dbReference>
<dbReference type="SUPFAM" id="SSF54928">
    <property type="entry name" value="RNA-binding domain, RBD"/>
    <property type="match status" value="1"/>
</dbReference>
<dbReference type="PROSITE" id="PS50102">
    <property type="entry name" value="RRM"/>
    <property type="match status" value="1"/>
</dbReference>
<feature type="chain" id="PRO_0000355184" description="RNA-binding protein 38">
    <location>
        <begin position="1"/>
        <end position="214"/>
    </location>
</feature>
<feature type="domain" description="RRM" evidence="2">
    <location>
        <begin position="11"/>
        <end position="88"/>
    </location>
</feature>
<feature type="sequence conflict" description="In Ref. 1; AAP42281." evidence="5" ref="1">
    <original>T</original>
    <variation>A</variation>
    <location>
        <position position="126"/>
    </location>
</feature>
<proteinExistence type="evidence at protein level"/>
<reference key="1">
    <citation type="journal article" date="2004" name="Development">
        <title>XSEB4R, a novel RNA-binding protein involved in retinal cell differentiation downstream of bHLH proneural genes.</title>
        <authorList>
            <person name="Boy S."/>
            <person name="Souopgui J."/>
            <person name="Amato M.A."/>
            <person name="Wegnez M."/>
            <person name="Pieler T."/>
            <person name="Perron M."/>
        </authorList>
    </citation>
    <scope>NUCLEOTIDE SEQUENCE [MRNA]</scope>
    <scope>FUNCTION</scope>
    <scope>TISSUE SPECIFICITY</scope>
</reference>
<reference key="2">
    <citation type="submission" date="2004-06" db="EMBL/GenBank/DDBJ databases">
        <authorList>
            <consortium name="NIH - Xenopus Gene Collection (XGC) project"/>
        </authorList>
    </citation>
    <scope>NUCLEOTIDE SEQUENCE [LARGE SCALE MRNA]</scope>
    <source>
        <tissue>Spleen</tissue>
    </source>
</reference>
<reference key="3">
    <citation type="journal article" date="2008" name="Genes Dev.">
        <title>The RNA-binding protein XSeb4R: a positive regulator of VegT mRNA stability and translation that is required for germ layer formation in Xenopus.</title>
        <authorList>
            <person name="Souopgui J."/>
            <person name="Rust B."/>
            <person name="Vanhomwegen J."/>
            <person name="Heasman J."/>
            <person name="Henningfeld K.A."/>
            <person name="Bellefroid E."/>
            <person name="Pieler T."/>
        </authorList>
    </citation>
    <scope>FUNCTION</scope>
    <scope>RNA-BINDING</scope>
    <scope>SUBCELLULAR LOCATION</scope>
</reference>
<protein>
    <recommendedName>
        <fullName>RNA-binding protein 38</fullName>
    </recommendedName>
    <alternativeName>
        <fullName>RNA-binding motif protein 38</fullName>
    </alternativeName>
    <alternativeName>
        <fullName>RNA-binding protein XSeb4R</fullName>
    </alternativeName>
</protein>
<accession>Q7T3I7</accession>
<accession>Q6GQF2</accession>
<gene>
    <name type="primary">rbm38</name>
    <name type="synonym">xseb4r</name>
</gene>